<evidence type="ECO:0000255" key="1">
    <source>
        <dbReference type="HAMAP-Rule" id="MF_02002"/>
    </source>
</evidence>
<name>SYI_COXBR</name>
<gene>
    <name evidence="1" type="primary">ileS</name>
    <name type="ordered locus">COXBURSA331_A0508</name>
</gene>
<comment type="function">
    <text evidence="1">Catalyzes the attachment of isoleucine to tRNA(Ile). As IleRS can inadvertently accommodate and process structurally similar amino acids such as valine, to avoid such errors it has two additional distinct tRNA(Ile)-dependent editing activities. One activity is designated as 'pretransfer' editing and involves the hydrolysis of activated Val-AMP. The other activity is designated 'posttransfer' editing and involves deacylation of mischarged Val-tRNA(Ile).</text>
</comment>
<comment type="catalytic activity">
    <reaction evidence="1">
        <text>tRNA(Ile) + L-isoleucine + ATP = L-isoleucyl-tRNA(Ile) + AMP + diphosphate</text>
        <dbReference type="Rhea" id="RHEA:11060"/>
        <dbReference type="Rhea" id="RHEA-COMP:9666"/>
        <dbReference type="Rhea" id="RHEA-COMP:9695"/>
        <dbReference type="ChEBI" id="CHEBI:30616"/>
        <dbReference type="ChEBI" id="CHEBI:33019"/>
        <dbReference type="ChEBI" id="CHEBI:58045"/>
        <dbReference type="ChEBI" id="CHEBI:78442"/>
        <dbReference type="ChEBI" id="CHEBI:78528"/>
        <dbReference type="ChEBI" id="CHEBI:456215"/>
        <dbReference type="EC" id="6.1.1.5"/>
    </reaction>
</comment>
<comment type="cofactor">
    <cofactor evidence="1">
        <name>Zn(2+)</name>
        <dbReference type="ChEBI" id="CHEBI:29105"/>
    </cofactor>
    <text evidence="1">Binds 1 zinc ion per subunit.</text>
</comment>
<comment type="subunit">
    <text evidence="1">Monomer.</text>
</comment>
<comment type="subcellular location">
    <subcellularLocation>
        <location evidence="1">Cytoplasm</location>
    </subcellularLocation>
</comment>
<comment type="domain">
    <text evidence="1">IleRS has two distinct active sites: one for aminoacylation and one for editing. The misactivated valine is translocated from the active site to the editing site, which sterically excludes the correctly activated isoleucine. The single editing site contains two valyl binding pockets, one specific for each substrate (Val-AMP or Val-tRNA(Ile)).</text>
</comment>
<comment type="similarity">
    <text evidence="1">Belongs to the class-I aminoacyl-tRNA synthetase family. IleS type 1 subfamily.</text>
</comment>
<sequence length="936" mass="106135">MTDYKDTLNLPQTDFPMRANLPEREPQTLARWQTLDLYRKIRKDREGQPKFILHDGPPYANGRAHLGTAFNKTLKDIVVKSKTLSGFDAPFVPGWDCHGLPIELNVEKKLGKDKLSANAFRQACRDYAFSQIELQRDDFQRLGVLGDWQHPYLTMDFGYEADTVRALAKIVANGHLLRGQKPVHWCAACGSALAEAEVEYRDKASPAVDVGFEAVDAEAVRQRFGVKNATTRVLVPIWTTTPWTLPANEAVSVHPELHYALVKSELQNQPVYLILAKDLVDSAMLRYGVDDYEVHGNLKGDALEGMQLQHPFLDRIVPIILGEHVTTEAGTGNVHTAPAHGLEDYFVAEKYNLPINNPVDARGRFIPDTFLVGGQPVFKANEPIIVLLADSGHLLHSETIQHSYPHCWRHKTPLIFRATPQWFIGMNKNGLRERALAEIEKVTWLPAWGEARIGKLVADRPDWCISRQRLWGIPIPLFIHKKSGELHPKSPALMEKVAQLIEKESVDAWFDLDPKVLLGDDADHYEKVTDVLDVWFDSGVTHFCVLEKRRELKVPADIYLEGSDQHRGWFQSSLLTSLAIRDKAPYKSVLTYGFVVDSQGRKMSKSLGNVILPADVVKNLGADVLRLWAASMDYTVEVNVSDEILKRASDAYRRIRNTARFLLSNLYDFDPKKDKVAVDQLVALDRWAIFTTQKLQEKIITAYDRYRFPAIYQAIHNFCTVEMGSFYLDIIKDRLYTSKESGLPRRSAQTALYYIAEAFVRWIAPIISFTADEIWQFMPGDREPSVFLTQWFSDFPNAALSGEEEQRWQLLLQIRDEVNKALETYRNEGKIGSALTAEVVLYADERLNAVIATLGEELRFVLITSEASVLPFNEKSKAAFDTALPGLALEINVSEFEKCARCWQRRSSVGQIKEHADLCDRCVSNAFEDGEMRQFA</sequence>
<reference key="1">
    <citation type="submission" date="2007-11" db="EMBL/GenBank/DDBJ databases">
        <title>Genome sequencing of phylogenetically and phenotypically diverse Coxiella burnetii isolates.</title>
        <authorList>
            <person name="Seshadri R."/>
            <person name="Samuel J.E."/>
        </authorList>
    </citation>
    <scope>NUCLEOTIDE SEQUENCE [LARGE SCALE GENOMIC DNA]</scope>
    <source>
        <strain>RSA 331 / Henzerling II</strain>
    </source>
</reference>
<accession>A9NBM5</accession>
<feature type="chain" id="PRO_1000088544" description="Isoleucine--tRNA ligase">
    <location>
        <begin position="1"/>
        <end position="936"/>
    </location>
</feature>
<feature type="short sequence motif" description="'HIGH' region">
    <location>
        <begin position="58"/>
        <end position="68"/>
    </location>
</feature>
<feature type="short sequence motif" description="'KMSKS' region">
    <location>
        <begin position="602"/>
        <end position="606"/>
    </location>
</feature>
<feature type="binding site" evidence="1">
    <location>
        <position position="561"/>
    </location>
    <ligand>
        <name>L-isoleucyl-5'-AMP</name>
        <dbReference type="ChEBI" id="CHEBI:178002"/>
    </ligand>
</feature>
<feature type="binding site" evidence="1">
    <location>
        <position position="605"/>
    </location>
    <ligand>
        <name>ATP</name>
        <dbReference type="ChEBI" id="CHEBI:30616"/>
    </ligand>
</feature>
<feature type="binding site" evidence="1">
    <location>
        <position position="899"/>
    </location>
    <ligand>
        <name>Zn(2+)</name>
        <dbReference type="ChEBI" id="CHEBI:29105"/>
    </ligand>
</feature>
<feature type="binding site" evidence="1">
    <location>
        <position position="902"/>
    </location>
    <ligand>
        <name>Zn(2+)</name>
        <dbReference type="ChEBI" id="CHEBI:29105"/>
    </ligand>
</feature>
<feature type="binding site" evidence="1">
    <location>
        <position position="919"/>
    </location>
    <ligand>
        <name>Zn(2+)</name>
        <dbReference type="ChEBI" id="CHEBI:29105"/>
    </ligand>
</feature>
<feature type="binding site" evidence="1">
    <location>
        <position position="922"/>
    </location>
    <ligand>
        <name>Zn(2+)</name>
        <dbReference type="ChEBI" id="CHEBI:29105"/>
    </ligand>
</feature>
<dbReference type="EC" id="6.1.1.5" evidence="1"/>
<dbReference type="EMBL" id="CP000890">
    <property type="protein sequence ID" value="ABX77840.1"/>
    <property type="molecule type" value="Genomic_DNA"/>
</dbReference>
<dbReference type="RefSeq" id="WP_012220201.1">
    <property type="nucleotide sequence ID" value="NC_010117.1"/>
</dbReference>
<dbReference type="SMR" id="A9NBM5"/>
<dbReference type="KEGG" id="cbs:COXBURSA331_A0508"/>
<dbReference type="HOGENOM" id="CLU_001493_7_1_6"/>
<dbReference type="GO" id="GO:0005829">
    <property type="term" value="C:cytosol"/>
    <property type="evidence" value="ECO:0007669"/>
    <property type="project" value="TreeGrafter"/>
</dbReference>
<dbReference type="GO" id="GO:0002161">
    <property type="term" value="F:aminoacyl-tRNA deacylase activity"/>
    <property type="evidence" value="ECO:0007669"/>
    <property type="project" value="InterPro"/>
</dbReference>
<dbReference type="GO" id="GO:0005524">
    <property type="term" value="F:ATP binding"/>
    <property type="evidence" value="ECO:0007669"/>
    <property type="project" value="UniProtKB-UniRule"/>
</dbReference>
<dbReference type="GO" id="GO:0004822">
    <property type="term" value="F:isoleucine-tRNA ligase activity"/>
    <property type="evidence" value="ECO:0007669"/>
    <property type="project" value="UniProtKB-UniRule"/>
</dbReference>
<dbReference type="GO" id="GO:0000049">
    <property type="term" value="F:tRNA binding"/>
    <property type="evidence" value="ECO:0007669"/>
    <property type="project" value="InterPro"/>
</dbReference>
<dbReference type="GO" id="GO:0008270">
    <property type="term" value="F:zinc ion binding"/>
    <property type="evidence" value="ECO:0007669"/>
    <property type="project" value="UniProtKB-UniRule"/>
</dbReference>
<dbReference type="GO" id="GO:0006428">
    <property type="term" value="P:isoleucyl-tRNA aminoacylation"/>
    <property type="evidence" value="ECO:0007669"/>
    <property type="project" value="UniProtKB-UniRule"/>
</dbReference>
<dbReference type="CDD" id="cd07960">
    <property type="entry name" value="Anticodon_Ia_Ile_BEm"/>
    <property type="match status" value="1"/>
</dbReference>
<dbReference type="CDD" id="cd00818">
    <property type="entry name" value="IleRS_core"/>
    <property type="match status" value="1"/>
</dbReference>
<dbReference type="FunFam" id="1.10.730.20:FF:000001">
    <property type="entry name" value="Isoleucine--tRNA ligase"/>
    <property type="match status" value="1"/>
</dbReference>
<dbReference type="FunFam" id="3.40.50.620:FF:000042">
    <property type="entry name" value="Isoleucine--tRNA ligase"/>
    <property type="match status" value="1"/>
</dbReference>
<dbReference type="FunFam" id="3.40.50.620:FF:000048">
    <property type="entry name" value="Isoleucine--tRNA ligase"/>
    <property type="match status" value="1"/>
</dbReference>
<dbReference type="FunFam" id="3.90.740.10:FF:000002">
    <property type="entry name" value="Isoleucine--tRNA ligase"/>
    <property type="match status" value="1"/>
</dbReference>
<dbReference type="Gene3D" id="1.10.730.20">
    <property type="match status" value="1"/>
</dbReference>
<dbReference type="Gene3D" id="3.40.50.620">
    <property type="entry name" value="HUPs"/>
    <property type="match status" value="2"/>
</dbReference>
<dbReference type="Gene3D" id="3.90.740.10">
    <property type="entry name" value="Valyl/Leucyl/Isoleucyl-tRNA synthetase, editing domain"/>
    <property type="match status" value="1"/>
</dbReference>
<dbReference type="HAMAP" id="MF_02002">
    <property type="entry name" value="Ile_tRNA_synth_type1"/>
    <property type="match status" value="1"/>
</dbReference>
<dbReference type="InterPro" id="IPR002300">
    <property type="entry name" value="aa-tRNA-synth_Ia"/>
</dbReference>
<dbReference type="InterPro" id="IPR033708">
    <property type="entry name" value="Anticodon_Ile_BEm"/>
</dbReference>
<dbReference type="InterPro" id="IPR002301">
    <property type="entry name" value="Ile-tRNA-ligase"/>
</dbReference>
<dbReference type="InterPro" id="IPR023585">
    <property type="entry name" value="Ile-tRNA-ligase_type1"/>
</dbReference>
<dbReference type="InterPro" id="IPR050081">
    <property type="entry name" value="Ile-tRNA_ligase"/>
</dbReference>
<dbReference type="InterPro" id="IPR013155">
    <property type="entry name" value="M/V/L/I-tRNA-synth_anticd-bd"/>
</dbReference>
<dbReference type="InterPro" id="IPR014729">
    <property type="entry name" value="Rossmann-like_a/b/a_fold"/>
</dbReference>
<dbReference type="InterPro" id="IPR009080">
    <property type="entry name" value="tRNAsynth_Ia_anticodon-bd"/>
</dbReference>
<dbReference type="InterPro" id="IPR009008">
    <property type="entry name" value="Val/Leu/Ile-tRNA-synth_edit"/>
</dbReference>
<dbReference type="InterPro" id="IPR010663">
    <property type="entry name" value="Znf_FPG/IleRS"/>
</dbReference>
<dbReference type="NCBIfam" id="TIGR00392">
    <property type="entry name" value="ileS"/>
    <property type="match status" value="1"/>
</dbReference>
<dbReference type="PANTHER" id="PTHR42765:SF1">
    <property type="entry name" value="ISOLEUCINE--TRNA LIGASE, MITOCHONDRIAL"/>
    <property type="match status" value="1"/>
</dbReference>
<dbReference type="PANTHER" id="PTHR42765">
    <property type="entry name" value="SOLEUCYL-TRNA SYNTHETASE"/>
    <property type="match status" value="1"/>
</dbReference>
<dbReference type="Pfam" id="PF08264">
    <property type="entry name" value="Anticodon_1"/>
    <property type="match status" value="1"/>
</dbReference>
<dbReference type="Pfam" id="PF00133">
    <property type="entry name" value="tRNA-synt_1"/>
    <property type="match status" value="1"/>
</dbReference>
<dbReference type="Pfam" id="PF06827">
    <property type="entry name" value="zf-FPG_IleRS"/>
    <property type="match status" value="1"/>
</dbReference>
<dbReference type="PRINTS" id="PR00984">
    <property type="entry name" value="TRNASYNTHILE"/>
</dbReference>
<dbReference type="SUPFAM" id="SSF47323">
    <property type="entry name" value="Anticodon-binding domain of a subclass of class I aminoacyl-tRNA synthetases"/>
    <property type="match status" value="1"/>
</dbReference>
<dbReference type="SUPFAM" id="SSF52374">
    <property type="entry name" value="Nucleotidylyl transferase"/>
    <property type="match status" value="1"/>
</dbReference>
<dbReference type="SUPFAM" id="SSF50677">
    <property type="entry name" value="ValRS/IleRS/LeuRS editing domain"/>
    <property type="match status" value="1"/>
</dbReference>
<protein>
    <recommendedName>
        <fullName evidence="1">Isoleucine--tRNA ligase</fullName>
        <ecNumber evidence="1">6.1.1.5</ecNumber>
    </recommendedName>
    <alternativeName>
        <fullName evidence="1">Isoleucyl-tRNA synthetase</fullName>
        <shortName evidence="1">IleRS</shortName>
    </alternativeName>
</protein>
<keyword id="KW-0030">Aminoacyl-tRNA synthetase</keyword>
<keyword id="KW-0067">ATP-binding</keyword>
<keyword id="KW-0963">Cytoplasm</keyword>
<keyword id="KW-0436">Ligase</keyword>
<keyword id="KW-0479">Metal-binding</keyword>
<keyword id="KW-0547">Nucleotide-binding</keyword>
<keyword id="KW-0648">Protein biosynthesis</keyword>
<keyword id="KW-0862">Zinc</keyword>
<organism>
    <name type="scientific">Coxiella burnetii (strain RSA 331 / Henzerling II)</name>
    <dbReference type="NCBI Taxonomy" id="360115"/>
    <lineage>
        <taxon>Bacteria</taxon>
        <taxon>Pseudomonadati</taxon>
        <taxon>Pseudomonadota</taxon>
        <taxon>Gammaproteobacteria</taxon>
        <taxon>Legionellales</taxon>
        <taxon>Coxiellaceae</taxon>
        <taxon>Coxiella</taxon>
    </lineage>
</organism>
<proteinExistence type="inferred from homology"/>